<comment type="function">
    <text evidence="3">Peptidoglycan polymerase that is essential for cell division.</text>
</comment>
<comment type="catalytic activity">
    <reaction evidence="3">
        <text>[GlcNAc-(1-&gt;4)-Mur2Ac(oyl-L-Ala-gamma-D-Glu-L-Lys-D-Ala-D-Ala)](n)-di-trans,octa-cis-undecaprenyl diphosphate + beta-D-GlcNAc-(1-&gt;4)-Mur2Ac(oyl-L-Ala-gamma-D-Glu-L-Lys-D-Ala-D-Ala)-di-trans,octa-cis-undecaprenyl diphosphate = [GlcNAc-(1-&gt;4)-Mur2Ac(oyl-L-Ala-gamma-D-Glu-L-Lys-D-Ala-D-Ala)](n+1)-di-trans,octa-cis-undecaprenyl diphosphate + di-trans,octa-cis-undecaprenyl diphosphate + H(+)</text>
        <dbReference type="Rhea" id="RHEA:23708"/>
        <dbReference type="Rhea" id="RHEA-COMP:9602"/>
        <dbReference type="Rhea" id="RHEA-COMP:9603"/>
        <dbReference type="ChEBI" id="CHEBI:15378"/>
        <dbReference type="ChEBI" id="CHEBI:58405"/>
        <dbReference type="ChEBI" id="CHEBI:60033"/>
        <dbReference type="ChEBI" id="CHEBI:78435"/>
        <dbReference type="EC" id="2.4.99.28"/>
    </reaction>
</comment>
<comment type="pathway">
    <text evidence="3">Cell wall biogenesis; peptidoglycan biosynthesis.</text>
</comment>
<comment type="subunit">
    <text evidence="5">Interacts with FtsI, FtsN and the cell division inhibitor SidA.</text>
</comment>
<comment type="subcellular location">
    <subcellularLocation>
        <location evidence="1">Cell inner membrane</location>
        <topology evidence="4">Multi-pass membrane protein</topology>
    </subcellularLocation>
    <text evidence="1">Localizes to the division septum.</text>
</comment>
<comment type="similarity">
    <text evidence="6">Belongs to the SEDS family. FtsW subfamily.</text>
</comment>
<proteinExistence type="evidence at protein level"/>
<keyword id="KW-0131">Cell cycle</keyword>
<keyword id="KW-0132">Cell division</keyword>
<keyword id="KW-0997">Cell inner membrane</keyword>
<keyword id="KW-1003">Cell membrane</keyword>
<keyword id="KW-0133">Cell shape</keyword>
<keyword id="KW-0961">Cell wall biogenesis/degradation</keyword>
<keyword id="KW-0328">Glycosyltransferase</keyword>
<keyword id="KW-0472">Membrane</keyword>
<keyword id="KW-0573">Peptidoglycan synthesis</keyword>
<keyword id="KW-1185">Reference proteome</keyword>
<keyword id="KW-0808">Transferase</keyword>
<keyword id="KW-0812">Transmembrane</keyword>
<keyword id="KW-1133">Transmembrane helix</keyword>
<name>FTSW_CAUVN</name>
<reference key="1">
    <citation type="journal article" date="2010" name="J. Bacteriol.">
        <title>The genetic basis of laboratory adaptation in Caulobacter crescentus.</title>
        <authorList>
            <person name="Marks M.E."/>
            <person name="Castro-Rojas C.M."/>
            <person name="Teiling C."/>
            <person name="Du L."/>
            <person name="Kapatral V."/>
            <person name="Walunas T.L."/>
            <person name="Crosson S."/>
        </authorList>
    </citation>
    <scope>NUCLEOTIDE SEQUENCE [LARGE SCALE GENOMIC DNA]</scope>
    <source>
        <strain>NA1000 / CB15N</strain>
    </source>
</reference>
<reference key="2">
    <citation type="journal article" date="2011" name="Genes Dev.">
        <title>A DNA damage checkpoint in Caulobacter crescentus inhibits cell division through a direct interaction with FtsW.</title>
        <authorList>
            <person name="Modell J.W."/>
            <person name="Hopkins A.C."/>
            <person name="Laub M.T."/>
        </authorList>
    </citation>
    <scope>INTERACTION WITH FTSI; FTSN AND SIDA</scope>
    <scope>MUTAGENESIS OF PHE-145 AND THR-180</scope>
    <source>
        <strain>NA1000 / CB15N</strain>
    </source>
</reference>
<accession>B8H092</accession>
<dbReference type="EC" id="2.4.99.28" evidence="3"/>
<dbReference type="EMBL" id="CP001340">
    <property type="protein sequence ID" value="ACL96100.1"/>
    <property type="molecule type" value="Genomic_DNA"/>
</dbReference>
<dbReference type="RefSeq" id="WP_010920409.1">
    <property type="nucleotide sequence ID" value="NC_011916.1"/>
</dbReference>
<dbReference type="RefSeq" id="YP_002518008.1">
    <property type="nucleotide sequence ID" value="NC_011916.1"/>
</dbReference>
<dbReference type="SMR" id="B8H092"/>
<dbReference type="DIP" id="DIP-61066N"/>
<dbReference type="IntAct" id="B8H092">
    <property type="interactions" value="2"/>
</dbReference>
<dbReference type="GeneID" id="7332737"/>
<dbReference type="KEGG" id="ccs:CCNA_02635"/>
<dbReference type="PATRIC" id="fig|565050.3.peg.2583"/>
<dbReference type="HOGENOM" id="CLU_029243_1_1_5"/>
<dbReference type="OrthoDB" id="9768187at2"/>
<dbReference type="PhylomeDB" id="B8H092"/>
<dbReference type="UniPathway" id="UPA00219"/>
<dbReference type="Proteomes" id="UP000001364">
    <property type="component" value="Chromosome"/>
</dbReference>
<dbReference type="GO" id="GO:0032153">
    <property type="term" value="C:cell division site"/>
    <property type="evidence" value="ECO:0007669"/>
    <property type="project" value="TreeGrafter"/>
</dbReference>
<dbReference type="GO" id="GO:0005886">
    <property type="term" value="C:plasma membrane"/>
    <property type="evidence" value="ECO:0007669"/>
    <property type="project" value="UniProtKB-SubCell"/>
</dbReference>
<dbReference type="GO" id="GO:0015648">
    <property type="term" value="F:lipid-linked peptidoglycan transporter activity"/>
    <property type="evidence" value="ECO:0007669"/>
    <property type="project" value="TreeGrafter"/>
</dbReference>
<dbReference type="GO" id="GO:0008955">
    <property type="term" value="F:peptidoglycan glycosyltransferase activity"/>
    <property type="evidence" value="ECO:0007669"/>
    <property type="project" value="RHEA"/>
</dbReference>
<dbReference type="GO" id="GO:0051301">
    <property type="term" value="P:cell division"/>
    <property type="evidence" value="ECO:0007669"/>
    <property type="project" value="UniProtKB-KW"/>
</dbReference>
<dbReference type="GO" id="GO:0071555">
    <property type="term" value="P:cell wall organization"/>
    <property type="evidence" value="ECO:0007669"/>
    <property type="project" value="UniProtKB-KW"/>
</dbReference>
<dbReference type="GO" id="GO:0009252">
    <property type="term" value="P:peptidoglycan biosynthetic process"/>
    <property type="evidence" value="ECO:0007669"/>
    <property type="project" value="UniProtKB-UniPathway"/>
</dbReference>
<dbReference type="GO" id="GO:0008360">
    <property type="term" value="P:regulation of cell shape"/>
    <property type="evidence" value="ECO:0007669"/>
    <property type="project" value="UniProtKB-KW"/>
</dbReference>
<dbReference type="InterPro" id="IPR013437">
    <property type="entry name" value="FtsW"/>
</dbReference>
<dbReference type="InterPro" id="IPR001182">
    <property type="entry name" value="FtsW/RodA"/>
</dbReference>
<dbReference type="NCBIfam" id="TIGR02614">
    <property type="entry name" value="ftsW"/>
    <property type="match status" value="1"/>
</dbReference>
<dbReference type="PANTHER" id="PTHR30474">
    <property type="entry name" value="CELL CYCLE PROTEIN"/>
    <property type="match status" value="1"/>
</dbReference>
<dbReference type="PANTHER" id="PTHR30474:SF2">
    <property type="entry name" value="PEPTIDOGLYCAN GLYCOSYLTRANSFERASE FTSW-RELATED"/>
    <property type="match status" value="1"/>
</dbReference>
<dbReference type="Pfam" id="PF01098">
    <property type="entry name" value="FTSW_RODA_SPOVE"/>
    <property type="match status" value="1"/>
</dbReference>
<feature type="chain" id="PRO_0000420268" description="Probable peptidoglycan glycosyltransferase FtsW">
    <location>
        <begin position="1"/>
        <end position="390"/>
    </location>
</feature>
<feature type="transmembrane region" description="Helical" evidence="4">
    <location>
        <begin position="27"/>
        <end position="47"/>
    </location>
</feature>
<feature type="transmembrane region" description="Helical" evidence="4">
    <location>
        <begin position="60"/>
        <end position="80"/>
    </location>
</feature>
<feature type="transmembrane region" description="Helical" evidence="4">
    <location>
        <begin position="91"/>
        <end position="111"/>
    </location>
</feature>
<feature type="transmembrane region" description="Helical" evidence="4">
    <location>
        <begin position="125"/>
        <end position="145"/>
    </location>
</feature>
<feature type="transmembrane region" description="Helical" evidence="4">
    <location>
        <begin position="153"/>
        <end position="173"/>
    </location>
</feature>
<feature type="transmembrane region" description="Helical" evidence="4">
    <location>
        <begin position="181"/>
        <end position="201"/>
    </location>
</feature>
<feature type="transmembrane region" description="Helical" evidence="4">
    <location>
        <begin position="279"/>
        <end position="299"/>
    </location>
</feature>
<feature type="transmembrane region" description="Helical" evidence="4">
    <location>
        <begin position="315"/>
        <end position="335"/>
    </location>
</feature>
<feature type="transmembrane region" description="Helical" evidence="4">
    <location>
        <begin position="348"/>
        <end position="368"/>
    </location>
</feature>
<feature type="mutagenesis site" description="Decreases interaction with SidA." evidence="5">
    <original>F</original>
    <variation>L</variation>
    <location>
        <position position="145"/>
    </location>
</feature>
<feature type="mutagenesis site" description="Decreases interaction with SidA." evidence="5">
    <original>T</original>
    <variation>A</variation>
    <location>
        <position position="180"/>
    </location>
</feature>
<evidence type="ECO:0000250" key="1"/>
<evidence type="ECO:0000250" key="2">
    <source>
        <dbReference type="UniProtKB" id="O07639"/>
    </source>
</evidence>
<evidence type="ECO:0000250" key="3">
    <source>
        <dbReference type="UniProtKB" id="P39604"/>
    </source>
</evidence>
<evidence type="ECO:0000255" key="4"/>
<evidence type="ECO:0000269" key="5">
    <source>
    </source>
</evidence>
<evidence type="ECO:0000305" key="6"/>
<sequence length="390" mass="42014">MASNATHAFARTDRTALGLWWWTTDRWLLGATALLVTLGMLLSFASSPAAAQRIGIDDQFHFALRMCFFATASSVLMLITSMLSPRDIRRAAFFIYLGAIAVMIALPFIGHNAKGATRWLQFAGFTLQPSEFMKPALIVLVSWMFAEGQKGEGVPGVSIAFLLYFIAVALLLIQPDVGQTVLITIAFGAAFWMAGVPISWIMGLGGVALAGLGSTYFLFDHVHARVQKFLSPDQADTHQITRAAEAIRAGGLFGRGPGEGVMKRHVPDLHTDFIYSVAAEEYGLIFSWSLIGLFAFVVVRGLYKAMKLNDPFEQVAAAGLFVLVGQQALINIAVNLNMIPTKGMTLPFISYGGSSMLAMGLTLGMALALLRKRPGAYGASGEFGFGRADA</sequence>
<organism>
    <name type="scientific">Caulobacter vibrioides (strain NA1000 / CB15N)</name>
    <name type="common">Caulobacter crescentus</name>
    <dbReference type="NCBI Taxonomy" id="565050"/>
    <lineage>
        <taxon>Bacteria</taxon>
        <taxon>Pseudomonadati</taxon>
        <taxon>Pseudomonadota</taxon>
        <taxon>Alphaproteobacteria</taxon>
        <taxon>Caulobacterales</taxon>
        <taxon>Caulobacteraceae</taxon>
        <taxon>Caulobacter</taxon>
    </lineage>
</organism>
<protein>
    <recommendedName>
        <fullName evidence="3">Probable peptidoglycan glycosyltransferase FtsW</fullName>
        <shortName evidence="3">PGT</shortName>
        <ecNumber evidence="3">2.4.99.28</ecNumber>
    </recommendedName>
    <alternativeName>
        <fullName evidence="2">Cell division protein FtsW</fullName>
    </alternativeName>
    <alternativeName>
        <fullName evidence="3">Cell wall polymerase</fullName>
    </alternativeName>
    <alternativeName>
        <fullName evidence="3">Peptidoglycan polymerase</fullName>
        <shortName evidence="3">PG polymerase</shortName>
    </alternativeName>
</protein>
<gene>
    <name type="primary">ftsW</name>
    <name type="ordered locus">CCNA_02635</name>
</gene>